<accession>A5DSF0</accession>
<name>YME2_LODEL</name>
<proteinExistence type="inferred from homology"/>
<gene>
    <name type="primary">YME2</name>
    <name type="ORF">LELG_00286</name>
</gene>
<protein>
    <recommendedName>
        <fullName>Mitochondrial escape protein 2</fullName>
    </recommendedName>
</protein>
<evidence type="ECO:0000250" key="1"/>
<evidence type="ECO:0000255" key="2"/>
<evidence type="ECO:0000305" key="3"/>
<organism>
    <name type="scientific">Lodderomyces elongisporus (strain ATCC 11503 / CBS 2605 / JCM 1781 / NBRC 1676 / NRRL YB-4239)</name>
    <name type="common">Yeast</name>
    <name type="synonym">Saccharomyces elongisporus</name>
    <dbReference type="NCBI Taxonomy" id="379508"/>
    <lineage>
        <taxon>Eukaryota</taxon>
        <taxon>Fungi</taxon>
        <taxon>Dikarya</taxon>
        <taxon>Ascomycota</taxon>
        <taxon>Saccharomycotina</taxon>
        <taxon>Pichiomycetes</taxon>
        <taxon>Debaryomycetaceae</taxon>
        <taxon>Candida/Lodderomyces clade</taxon>
        <taxon>Lodderomyces</taxon>
    </lineage>
</organism>
<keyword id="KW-0175">Coiled coil</keyword>
<keyword id="KW-0472">Membrane</keyword>
<keyword id="KW-0496">Mitochondrion</keyword>
<keyword id="KW-0999">Mitochondrion inner membrane</keyword>
<keyword id="KW-0507">mRNA processing</keyword>
<keyword id="KW-1185">Reference proteome</keyword>
<keyword id="KW-0694">RNA-binding</keyword>
<keyword id="KW-0809">Transit peptide</keyword>
<keyword id="KW-0812">Transmembrane</keyword>
<keyword id="KW-1133">Transmembrane helix</keyword>
<comment type="function">
    <text evidence="1">Plays a role in maintaining the mitochondrial genome and in controlling the mtDNA escape. Involved in the regulation of mtDNA nucleotide structure and number. May have a dispensable role in early maturation of pre-rRNA (By similarity).</text>
</comment>
<comment type="subcellular location">
    <subcellularLocation>
        <location evidence="1">Mitochondrion inner membrane</location>
        <topology evidence="1">Single-pass membrane protein</topology>
    </subcellularLocation>
</comment>
<comment type="similarity">
    <text evidence="3">Belongs to the YME2 family.</text>
</comment>
<feature type="transit peptide" description="Mitochondrion" evidence="2">
    <location>
        <begin position="1"/>
        <end position="36"/>
    </location>
</feature>
<feature type="chain" id="PRO_0000343124" description="Mitochondrial escape protein 2">
    <location>
        <begin position="37"/>
        <end position="862"/>
    </location>
</feature>
<feature type="topological domain" description="Mitochondrial matrix" evidence="2">
    <location>
        <begin position="37"/>
        <end position="282"/>
    </location>
</feature>
<feature type="transmembrane region" description="Helical" evidence="2">
    <location>
        <begin position="283"/>
        <end position="303"/>
    </location>
</feature>
<feature type="topological domain" description="Mitochondrial intermembrane" evidence="2">
    <location>
        <begin position="304"/>
        <end position="862"/>
    </location>
</feature>
<feature type="domain" description="RRM">
    <location>
        <begin position="176"/>
        <end position="267"/>
    </location>
</feature>
<feature type="coiled-coil region" evidence="2">
    <location>
        <begin position="820"/>
        <end position="847"/>
    </location>
</feature>
<sequence>MMRLKILRASRINPALLRLRPPHLYSINKSQAFRFYATDIEDLKRQSDRTESDNSASTTGVIDKEANEVLLYYSFSNSRNFVKQYISRFLPSKFLGEQVEEKVKDVSYPLPQNSSITEVLHLPRDSGAFVKFKYSPSLTAKEFIQDIRSNIAESNTKRYSNIFMKAIGFVWDRSTQVYTVKGVPWIEDLKRFPSQKIGITYEGNPLTEEELYVLFRRYGLIDDIKVESTQSFVLFDTVRAAICAKHCITGMQLNGGKTTIHIQYVPVKKTNFIIEMISSHTKIALPIILALLATFAVLIFDPIREWFIQLKITRASHSFDEFKENKWFKIVYIPYKQLLNAVSSGYDYIDTQLHEVTGINNVDECLDDNQVLQEKNWESNMFWRERFEKAKQLKLWIMENIDTFIIVKGPQGSGKEEFVVDHTLMADAKLRKKVLLLECDELSKARSENSLIASTASQLGYFPVFTWTNSISQFIDLGLQGLTGQKSGLSESKETQIKNMFSLATQAIRSLTDGDYNKYKTNIEKKNRRLKDDEKIEVLRLEEFLAQHPESKPIIVINKFARKADVLSNDFIFPLIADWASGLIQNNIAHVVFTTADVGSLQHLNDALPNQVFKNISLSDASIASSKQYICDALKMKDTATLDDCIAPLGGRMLDLQAFIRRIKSGEDPLQAIDEMVNQAAELITTFFLHEHKFSNDDSNWNPSQVWLIMKLLSKKDVIDYDSLIKLPLFKQSKETLDTLSTLEKYDLVSLKREKGVLSKILTGRPLFTAAFENIISDVRIWKLYETQYLLNLVSLEVQKLTKFENELTTIYKINKLDGRIDYLSKKIDESNQKIVDYEKEIKDIAAYKGEPKQRHSFLGIF</sequence>
<reference key="1">
    <citation type="journal article" date="2009" name="Nature">
        <title>Evolution of pathogenicity and sexual reproduction in eight Candida genomes.</title>
        <authorList>
            <person name="Butler G."/>
            <person name="Rasmussen M.D."/>
            <person name="Lin M.F."/>
            <person name="Santos M.A.S."/>
            <person name="Sakthikumar S."/>
            <person name="Munro C.A."/>
            <person name="Rheinbay E."/>
            <person name="Grabherr M."/>
            <person name="Forche A."/>
            <person name="Reedy J.L."/>
            <person name="Agrafioti I."/>
            <person name="Arnaud M.B."/>
            <person name="Bates S."/>
            <person name="Brown A.J.P."/>
            <person name="Brunke S."/>
            <person name="Costanzo M.C."/>
            <person name="Fitzpatrick D.A."/>
            <person name="de Groot P.W.J."/>
            <person name="Harris D."/>
            <person name="Hoyer L.L."/>
            <person name="Hube B."/>
            <person name="Klis F.M."/>
            <person name="Kodira C."/>
            <person name="Lennard N."/>
            <person name="Logue M.E."/>
            <person name="Martin R."/>
            <person name="Neiman A.M."/>
            <person name="Nikolaou E."/>
            <person name="Quail M.A."/>
            <person name="Quinn J."/>
            <person name="Santos M.C."/>
            <person name="Schmitzberger F.F."/>
            <person name="Sherlock G."/>
            <person name="Shah P."/>
            <person name="Silverstein K.A.T."/>
            <person name="Skrzypek M.S."/>
            <person name="Soll D."/>
            <person name="Staggs R."/>
            <person name="Stansfield I."/>
            <person name="Stumpf M.P.H."/>
            <person name="Sudbery P.E."/>
            <person name="Srikantha T."/>
            <person name="Zeng Q."/>
            <person name="Berman J."/>
            <person name="Berriman M."/>
            <person name="Heitman J."/>
            <person name="Gow N.A.R."/>
            <person name="Lorenz M.C."/>
            <person name="Birren B.W."/>
            <person name="Kellis M."/>
            <person name="Cuomo C.A."/>
        </authorList>
    </citation>
    <scope>NUCLEOTIDE SEQUENCE [LARGE SCALE GENOMIC DNA]</scope>
    <source>
        <strain>ATCC 11503 / BCRC 21390 / CBS 2605 / JCM 1781 / NBRC 1676 / NRRL YB-4239</strain>
    </source>
</reference>
<dbReference type="EMBL" id="CH981524">
    <property type="protein sequence ID" value="EDK42108.1"/>
    <property type="molecule type" value="Genomic_DNA"/>
</dbReference>
<dbReference type="RefSeq" id="XP_001527766.1">
    <property type="nucleotide sequence ID" value="XM_001527716.1"/>
</dbReference>
<dbReference type="FunCoup" id="A5DSF0">
    <property type="interactions" value="128"/>
</dbReference>
<dbReference type="GeneID" id="5234934"/>
<dbReference type="KEGG" id="lel:PVL30_000280"/>
<dbReference type="VEuPathDB" id="FungiDB:LELG_00286"/>
<dbReference type="eggNOG" id="ENOG502QS0P">
    <property type="taxonomic scope" value="Eukaryota"/>
</dbReference>
<dbReference type="HOGENOM" id="CLU_007861_1_0_1"/>
<dbReference type="InParanoid" id="A5DSF0"/>
<dbReference type="OMA" id="WTPEQAW"/>
<dbReference type="OrthoDB" id="10267654at2759"/>
<dbReference type="Proteomes" id="UP000001996">
    <property type="component" value="Unassembled WGS sequence"/>
</dbReference>
<dbReference type="GO" id="GO:0005743">
    <property type="term" value="C:mitochondrial inner membrane"/>
    <property type="evidence" value="ECO:0007669"/>
    <property type="project" value="UniProtKB-SubCell"/>
</dbReference>
<dbReference type="GO" id="GO:0003723">
    <property type="term" value="F:RNA binding"/>
    <property type="evidence" value="ECO:0007669"/>
    <property type="project" value="UniProtKB-KW"/>
</dbReference>
<dbReference type="GO" id="GO:0000002">
    <property type="term" value="P:mitochondrial genome maintenance"/>
    <property type="evidence" value="ECO:0007669"/>
    <property type="project" value="EnsemblFungi"/>
</dbReference>
<dbReference type="GO" id="GO:0006397">
    <property type="term" value="P:mRNA processing"/>
    <property type="evidence" value="ECO:0007669"/>
    <property type="project" value="UniProtKB-KW"/>
</dbReference>
<dbReference type="CDD" id="cd12433">
    <property type="entry name" value="RRM_Yme2p_like"/>
    <property type="match status" value="1"/>
</dbReference>
<dbReference type="Gene3D" id="3.30.70.330">
    <property type="match status" value="1"/>
</dbReference>
<dbReference type="InterPro" id="IPR018850">
    <property type="entry name" value="Mt_escape_2_C"/>
</dbReference>
<dbReference type="InterPro" id="IPR012677">
    <property type="entry name" value="Nucleotide-bd_a/b_plait_sf"/>
</dbReference>
<dbReference type="InterPro" id="IPR035979">
    <property type="entry name" value="RBD_domain_sf"/>
</dbReference>
<dbReference type="InterPro" id="IPR039627">
    <property type="entry name" value="Yme2_C"/>
</dbReference>
<dbReference type="InterPro" id="IPR034260">
    <property type="entry name" value="Yme2_RRM"/>
</dbReference>
<dbReference type="PANTHER" id="PTHR32198">
    <property type="entry name" value="MITOCHONDRIAL ESCAPE PROTEIN 2"/>
    <property type="match status" value="1"/>
</dbReference>
<dbReference type="PANTHER" id="PTHR32198:SF2">
    <property type="entry name" value="MITOCHONDRIAL ESCAPE PROTEIN 2"/>
    <property type="match status" value="1"/>
</dbReference>
<dbReference type="Pfam" id="PF10443">
    <property type="entry name" value="RNA12"/>
    <property type="match status" value="1"/>
</dbReference>
<dbReference type="SUPFAM" id="SSF54928">
    <property type="entry name" value="RNA-binding domain, RBD"/>
    <property type="match status" value="1"/>
</dbReference>